<proteinExistence type="inferred from homology"/>
<comment type="function">
    <text evidence="1">Transcriptional regulator that represses the expression of the lsr operon in the absence of the quorum-sensing signaling molecule autoinducer 2 (AI-2) (By similarity). It also represses the expression of the lsrRK operon (By similarity). Acts by binding directly to the lsrA and lsrR promoter regions (By similarity). In the presence of phosphorylated autoinducer-2 (phospho-AI-2), LsrR is inactivated, leading to the transcription of the genes (By similarity).</text>
</comment>
<comment type="activity regulation">
    <text evidence="1">Inactivated by phosphorylated autoinducer-2 (phospho-AI-2) (By similarity). Phospho-AI-2 acts by binding to LsrR, which is then unable to bind to the promoter regions, allowing the transcription of the target genes (By similarity).</text>
</comment>
<comment type="subcellular location">
    <subcellularLocation>
        <location evidence="2">Cytoplasm</location>
    </subcellularLocation>
</comment>
<comment type="similarity">
    <text evidence="2">Belongs to the SorC transcriptional regulatory family.</text>
</comment>
<name>LSRR_ECODH</name>
<gene>
    <name type="primary">lsrR</name>
    <name type="ordered locus">ECDH10B_1643</name>
</gene>
<sequence length="317" mass="33797">MTINDSAISEQGMCEEEQVARIAWFYYHDGLTQSEISDRLGLTRLKVSRLLEKGHQSGIIRVQINSRFEGCLEYETQLRRQFSLQHVRVIPGLADADVGGRLGIGAAHMLMSLLQPQQMLAIGFGEATMNTLQRLSGFISSQQIRLVTLSGGVGSYMTGIGQLNAACSVNIIPAPLRASSADIARTLKNENCVKDVLLAAQAADVAIVGIGAVSQQDDATIIRSGYISQGEQLMIGRKGAVGDILGYFFDAKGDVVTNIKIHNELIGLPLSALKTIPVRVGVAGGENKAEAIAAAMKGGYINALVTDQDTAAAILRS</sequence>
<dbReference type="EMBL" id="CP000948">
    <property type="protein sequence ID" value="ACB02722.1"/>
    <property type="molecule type" value="Genomic_DNA"/>
</dbReference>
<dbReference type="RefSeq" id="WP_000154342.1">
    <property type="nucleotide sequence ID" value="NC_010473.1"/>
</dbReference>
<dbReference type="SMR" id="B1XEA0"/>
<dbReference type="KEGG" id="ecd:ECDH10B_1643"/>
<dbReference type="HOGENOM" id="CLU_054506_0_1_6"/>
<dbReference type="GO" id="GO:0005737">
    <property type="term" value="C:cytoplasm"/>
    <property type="evidence" value="ECO:0007669"/>
    <property type="project" value="UniProtKB-SubCell"/>
</dbReference>
<dbReference type="GO" id="GO:0030246">
    <property type="term" value="F:carbohydrate binding"/>
    <property type="evidence" value="ECO:0007669"/>
    <property type="project" value="InterPro"/>
</dbReference>
<dbReference type="GO" id="GO:0003677">
    <property type="term" value="F:DNA binding"/>
    <property type="evidence" value="ECO:0007669"/>
    <property type="project" value="UniProtKB-KW"/>
</dbReference>
<dbReference type="FunFam" id="1.10.10.10:FF:000195">
    <property type="entry name" value="LsrR family transcriptional regulator"/>
    <property type="match status" value="1"/>
</dbReference>
<dbReference type="FunFam" id="3.40.50.1360:FF:000012">
    <property type="entry name" value="LsrR family transcriptional regulator"/>
    <property type="match status" value="1"/>
</dbReference>
<dbReference type="Gene3D" id="3.40.50.1360">
    <property type="match status" value="1"/>
</dbReference>
<dbReference type="Gene3D" id="1.10.10.10">
    <property type="entry name" value="Winged helix-like DNA-binding domain superfamily/Winged helix DNA-binding domain"/>
    <property type="match status" value="1"/>
</dbReference>
<dbReference type="InterPro" id="IPR037171">
    <property type="entry name" value="NagB/RpiA_transferase-like"/>
</dbReference>
<dbReference type="InterPro" id="IPR051054">
    <property type="entry name" value="SorC_transcr_regulators"/>
</dbReference>
<dbReference type="InterPro" id="IPR007324">
    <property type="entry name" value="Sugar-bd_dom_put"/>
</dbReference>
<dbReference type="InterPro" id="IPR036388">
    <property type="entry name" value="WH-like_DNA-bd_sf"/>
</dbReference>
<dbReference type="NCBIfam" id="NF011947">
    <property type="entry name" value="PRK15418.1"/>
    <property type="match status" value="1"/>
</dbReference>
<dbReference type="PANTHER" id="PTHR34294:SF1">
    <property type="entry name" value="TRANSCRIPTIONAL REGULATOR LSRR"/>
    <property type="match status" value="1"/>
</dbReference>
<dbReference type="PANTHER" id="PTHR34294">
    <property type="entry name" value="TRANSCRIPTIONAL REGULATOR-RELATED"/>
    <property type="match status" value="1"/>
</dbReference>
<dbReference type="Pfam" id="PF04198">
    <property type="entry name" value="Sugar-bind"/>
    <property type="match status" value="1"/>
</dbReference>
<dbReference type="SUPFAM" id="SSF100950">
    <property type="entry name" value="NagB/RpiA/CoA transferase-like"/>
    <property type="match status" value="1"/>
</dbReference>
<reference key="1">
    <citation type="journal article" date="2008" name="J. Bacteriol.">
        <title>The complete genome sequence of Escherichia coli DH10B: insights into the biology of a laboratory workhorse.</title>
        <authorList>
            <person name="Durfee T."/>
            <person name="Nelson R."/>
            <person name="Baldwin S."/>
            <person name="Plunkett G. III"/>
            <person name="Burland V."/>
            <person name="Mau B."/>
            <person name="Petrosino J.F."/>
            <person name="Qin X."/>
            <person name="Muzny D.M."/>
            <person name="Ayele M."/>
            <person name="Gibbs R.A."/>
            <person name="Csorgo B."/>
            <person name="Posfai G."/>
            <person name="Weinstock G.M."/>
            <person name="Blattner F.R."/>
        </authorList>
    </citation>
    <scope>NUCLEOTIDE SEQUENCE [LARGE SCALE GENOMIC DNA]</scope>
    <source>
        <strain>K12 / DH10B</strain>
    </source>
</reference>
<evidence type="ECO:0000250" key="1">
    <source>
        <dbReference type="UniProtKB" id="P76141"/>
    </source>
</evidence>
<evidence type="ECO:0000305" key="2"/>
<keyword id="KW-0963">Cytoplasm</keyword>
<keyword id="KW-0238">DNA-binding</keyword>
<keyword id="KW-0678">Repressor</keyword>
<keyword id="KW-0804">Transcription</keyword>
<keyword id="KW-0805">Transcription regulation</keyword>
<protein>
    <recommendedName>
        <fullName evidence="1">Transcriptional regulator LsrR</fullName>
    </recommendedName>
</protein>
<feature type="chain" id="PRO_0000351612" description="Transcriptional regulator LsrR">
    <location>
        <begin position="1"/>
        <end position="317"/>
    </location>
</feature>
<feature type="DNA-binding region" description="H-T-H motif" evidence="2">
    <location>
        <begin position="33"/>
        <end position="56"/>
    </location>
</feature>
<accession>B1XEA0</accession>
<organism>
    <name type="scientific">Escherichia coli (strain K12 / DH10B)</name>
    <dbReference type="NCBI Taxonomy" id="316385"/>
    <lineage>
        <taxon>Bacteria</taxon>
        <taxon>Pseudomonadati</taxon>
        <taxon>Pseudomonadota</taxon>
        <taxon>Gammaproteobacteria</taxon>
        <taxon>Enterobacterales</taxon>
        <taxon>Enterobacteriaceae</taxon>
        <taxon>Escherichia</taxon>
    </lineage>
</organism>